<organism>
    <name type="scientific">Crassostrea virginica</name>
    <name type="common">Eastern oyster</name>
    <dbReference type="NCBI Taxonomy" id="6565"/>
    <lineage>
        <taxon>Eukaryota</taxon>
        <taxon>Metazoa</taxon>
        <taxon>Spiralia</taxon>
        <taxon>Lophotrochozoa</taxon>
        <taxon>Mollusca</taxon>
        <taxon>Bivalvia</taxon>
        <taxon>Autobranchia</taxon>
        <taxon>Pteriomorphia</taxon>
        <taxon>Ostreida</taxon>
        <taxon>Ostreoidea</taxon>
        <taxon>Ostreidae</taxon>
        <taxon>Crassostrea</taxon>
    </lineage>
</organism>
<name>ACT_CRAVI</name>
<keyword id="KW-0067">ATP-binding</keyword>
<keyword id="KW-0963">Cytoplasm</keyword>
<keyword id="KW-0206">Cytoskeleton</keyword>
<keyword id="KW-0378">Hydrolase</keyword>
<keyword id="KW-0547">Nucleotide-binding</keyword>
<sequence>KIWHHTFYNELRVAPEEHPVLLTEAPLNPKANREKMTQIMFETFNSPAMYVAIQAVLSLYASGRTTGIVLDSGDGVSHTVPIYEGYALPHAIMRLDLAGRDLTDYLMKILTERGYSFTTTAEREIVRDIKEKLCYVALDFEQEMATAASSSSLEKSYELPDGQVITIGNERFRCPEAMFQPSFLGMESAGIHETSYQSIMKCDVDIRKDLYANIVLSGGTTMFPGIADRMQKEVTTLAPPTMKIKVIAPPERKYSVWIGGSILASL</sequence>
<comment type="function">
    <text>Actins are highly conserved proteins that are involved in various types of cell motility and are ubiquitously expressed in all eukaryotic cells.</text>
</comment>
<comment type="catalytic activity">
    <reaction evidence="1">
        <text>ATP + H2O = ADP + phosphate + H(+)</text>
        <dbReference type="Rhea" id="RHEA:13065"/>
        <dbReference type="ChEBI" id="CHEBI:15377"/>
        <dbReference type="ChEBI" id="CHEBI:15378"/>
        <dbReference type="ChEBI" id="CHEBI:30616"/>
        <dbReference type="ChEBI" id="CHEBI:43474"/>
        <dbReference type="ChEBI" id="CHEBI:456216"/>
    </reaction>
</comment>
<comment type="subcellular location">
    <subcellularLocation>
        <location>Cytoplasm</location>
        <location>Cytoskeleton</location>
    </subcellularLocation>
</comment>
<comment type="similarity">
    <text evidence="2">Belongs to the actin family.</text>
</comment>
<evidence type="ECO:0000250" key="1">
    <source>
        <dbReference type="UniProtKB" id="P68137"/>
    </source>
</evidence>
<evidence type="ECO:0000305" key="2"/>
<dbReference type="EC" id="3.6.4.-" evidence="1"/>
<dbReference type="EMBL" id="X75894">
    <property type="protein sequence ID" value="CAA53501.1"/>
    <property type="molecule type" value="mRNA"/>
</dbReference>
<dbReference type="SMR" id="Q92193"/>
<dbReference type="OrthoDB" id="10249208at2759"/>
<dbReference type="GO" id="GO:0005737">
    <property type="term" value="C:cytoplasm"/>
    <property type="evidence" value="ECO:0007669"/>
    <property type="project" value="UniProtKB-KW"/>
</dbReference>
<dbReference type="GO" id="GO:0005856">
    <property type="term" value="C:cytoskeleton"/>
    <property type="evidence" value="ECO:0007669"/>
    <property type="project" value="UniProtKB-SubCell"/>
</dbReference>
<dbReference type="GO" id="GO:0005524">
    <property type="term" value="F:ATP binding"/>
    <property type="evidence" value="ECO:0007669"/>
    <property type="project" value="UniProtKB-KW"/>
</dbReference>
<dbReference type="GO" id="GO:0016787">
    <property type="term" value="F:hydrolase activity"/>
    <property type="evidence" value="ECO:0007669"/>
    <property type="project" value="UniProtKB-KW"/>
</dbReference>
<dbReference type="FunFam" id="3.30.420.40:FF:000626">
    <property type="entry name" value="Actin 12"/>
    <property type="match status" value="1"/>
</dbReference>
<dbReference type="FunFam" id="3.30.420.40:FF:000131">
    <property type="entry name" value="Actin, alpha skeletal muscle"/>
    <property type="match status" value="1"/>
</dbReference>
<dbReference type="FunFam" id="3.30.420.40:FF:000205">
    <property type="entry name" value="Actin, alpha skeletal muscle"/>
    <property type="match status" value="1"/>
</dbReference>
<dbReference type="FunFam" id="3.90.640.10:FF:000047">
    <property type="entry name" value="Actin, alpha skeletal muscle"/>
    <property type="match status" value="1"/>
</dbReference>
<dbReference type="Gene3D" id="3.30.420.40">
    <property type="match status" value="2"/>
</dbReference>
<dbReference type="Gene3D" id="3.90.640.10">
    <property type="entry name" value="Actin, Chain A, domain 4"/>
    <property type="match status" value="1"/>
</dbReference>
<dbReference type="InterPro" id="IPR004000">
    <property type="entry name" value="Actin"/>
</dbReference>
<dbReference type="InterPro" id="IPR020902">
    <property type="entry name" value="Actin/actin-like_CS"/>
</dbReference>
<dbReference type="InterPro" id="IPR043129">
    <property type="entry name" value="ATPase_NBD"/>
</dbReference>
<dbReference type="PANTHER" id="PTHR11937">
    <property type="entry name" value="ACTIN"/>
    <property type="match status" value="1"/>
</dbReference>
<dbReference type="Pfam" id="PF00022">
    <property type="entry name" value="Actin"/>
    <property type="match status" value="1"/>
</dbReference>
<dbReference type="PRINTS" id="PR00190">
    <property type="entry name" value="ACTIN"/>
</dbReference>
<dbReference type="SMART" id="SM00268">
    <property type="entry name" value="ACTIN"/>
    <property type="match status" value="1"/>
</dbReference>
<dbReference type="SUPFAM" id="SSF53067">
    <property type="entry name" value="Actin-like ATPase domain"/>
    <property type="match status" value="2"/>
</dbReference>
<dbReference type="PROSITE" id="PS01132">
    <property type="entry name" value="ACTINS_ACT_LIKE"/>
    <property type="match status" value="1"/>
</dbReference>
<accession>Q92193</accession>
<proteinExistence type="evidence at transcript level"/>
<protein>
    <recommendedName>
        <fullName>Actin</fullName>
        <ecNumber evidence="1">3.6.4.-</ecNumber>
    </recommendedName>
</protein>
<reference key="1">
    <citation type="journal article" date="1993" name="Mol. Mar. Biol. Biotechnol.">
        <title>Sensitive assay for molluscan metallothionein induction based on ribonuclease protection and molecular titration of metallothionein and actin mRNAs.</title>
        <authorList>
            <person name="Unger M.E."/>
            <person name="Roesijadi G."/>
        </authorList>
    </citation>
    <scope>NUCLEOTIDE SEQUENCE [MRNA]</scope>
    <source>
        <tissue>Gill</tissue>
    </source>
</reference>
<feature type="chain" id="PRO_0000088916" description="Actin">
    <location>
        <begin position="1" status="less than"/>
        <end position="266" status="greater than"/>
    </location>
</feature>
<feature type="non-terminal residue">
    <location>
        <position position="1"/>
    </location>
</feature>
<feature type="non-terminal residue">
    <location>
        <position position="266"/>
    </location>
</feature>